<organismHost>
    <name type="scientific">Enterobacteriaceae</name>
    <dbReference type="NCBI Taxonomy" id="543"/>
</organismHost>
<accession>P79679</accession>
<sequence length="118" mass="12828">MAGNQRQGVAFIRVNGMELESMEGASFTPSGITREEVTGSRVYGWKGKPRAAKVECKIPGGGPIGLDEIIDWENITVEFQADTGETWMLANAWQADEPKNDGGEISLVLMAKQSKRIA</sequence>
<feature type="initiator methionine" description="Removed; by host" evidence="3">
    <location>
        <position position="1"/>
    </location>
</feature>
<feature type="chain" id="PRO_0000077688" description="Tail tube protein">
    <location>
        <begin position="2"/>
        <end position="118"/>
    </location>
</feature>
<gene>
    <name type="primary">M</name>
    <name type="ordered locus">Mup40</name>
</gene>
<protein>
    <recommendedName>
        <fullName>Tail tube protein</fullName>
        <shortName>TTP</shortName>
    </recommendedName>
    <alternativeName>
        <fullName>Gene product 40</fullName>
        <shortName>gp40</shortName>
    </alternativeName>
    <alternativeName>
        <fullName>Gene product M</fullName>
        <shortName>gpM</shortName>
    </alternativeName>
</protein>
<evidence type="ECO:0000269" key="1">
    <source>
    </source>
</evidence>
<evidence type="ECO:0000269" key="2">
    <source>
    </source>
</evidence>
<evidence type="ECO:0000269" key="3">
    <source>
    </source>
</evidence>
<evidence type="ECO:0000305" key="4"/>
<dbReference type="EMBL" id="AB000833">
    <property type="protein sequence ID" value="BAA19196.1"/>
    <property type="molecule type" value="Genomic_DNA"/>
</dbReference>
<dbReference type="EMBL" id="AF083977">
    <property type="protein sequence ID" value="AAF01118.1"/>
    <property type="molecule type" value="Genomic_DNA"/>
</dbReference>
<dbReference type="RefSeq" id="NP_050644.1">
    <property type="nucleotide sequence ID" value="NC_000929.1"/>
</dbReference>
<dbReference type="PDB" id="9KHY">
    <property type="method" value="EM"/>
    <property type="resolution" value="3.40 A"/>
    <property type="chains" value="A/B/C/D/E/F/G/H/I/J/K/L=1-118"/>
</dbReference>
<dbReference type="PDB" id="9KI1">
    <property type="method" value="EM"/>
    <property type="resolution" value="3.30 A"/>
    <property type="chains" value="4/5/6/7/8/9=1-118"/>
</dbReference>
<dbReference type="PDB" id="9LJ8">
    <property type="method" value="EM"/>
    <property type="resolution" value="3.80 A"/>
    <property type="chains" value="S/T/U/V/W/X/Y/Z/a/b/c/d=1-118"/>
</dbReference>
<dbReference type="PDBsum" id="9KHY"/>
<dbReference type="PDBsum" id="9KI1"/>
<dbReference type="PDBsum" id="9LJ8"/>
<dbReference type="EMDB" id="EMD-62359"/>
<dbReference type="EMDB" id="EMD-62362"/>
<dbReference type="EMDB" id="EMD-63137"/>
<dbReference type="SMR" id="P79679"/>
<dbReference type="GeneID" id="2636260"/>
<dbReference type="KEGG" id="vg:2636260"/>
<dbReference type="Proteomes" id="UP000002611">
    <property type="component" value="Genome"/>
</dbReference>
<dbReference type="GO" id="GO:0030430">
    <property type="term" value="C:host cell cytoplasm"/>
    <property type="evidence" value="ECO:0007669"/>
    <property type="project" value="UniProtKB-SubCell"/>
</dbReference>
<dbReference type="GO" id="GO:0098026">
    <property type="term" value="C:virus tail, tube"/>
    <property type="evidence" value="ECO:0000314"/>
    <property type="project" value="UniProtKB"/>
</dbReference>
<dbReference type="GO" id="GO:0099000">
    <property type="term" value="P:symbiont genome ejection through host cell envelope, contractile tail mechanism"/>
    <property type="evidence" value="ECO:0007669"/>
    <property type="project" value="UniProtKB-KW"/>
</dbReference>
<dbReference type="InterPro" id="IPR019596">
    <property type="entry name" value="Phage_Mu_GpM_tail_tub"/>
</dbReference>
<dbReference type="Pfam" id="PF10618">
    <property type="entry name" value="Tail_tube"/>
    <property type="match status" value="1"/>
</dbReference>
<comment type="function">
    <text evidence="3">Polymerizes to make up the central tail tube that is surrounded by the tail sheath protein (TSP). Tail tube protein polymerization takes place around the tape measure protein (TMP) and is probably directed by chaperone proteins. Upon binding to host cell, the tail sheath contracts and the tail tube penetrates the host envelope. The tail tube is involved in viral genome delivery during ejection.</text>
</comment>
<comment type="subunit">
    <text evidence="4">Homomultimer.</text>
</comment>
<comment type="subcellular location">
    <subcellularLocation>
        <location evidence="4">Virion</location>
    </subcellularLocation>
    <subcellularLocation>
        <location evidence="4">Host cytoplasm</location>
    </subcellularLocation>
    <text evidence="4">Tail.</text>
</comment>
<comment type="induction">
    <text evidence="2">Expressed in the late phase of the viral replicative cycle. Expression of late genes is activated by the viral late transcription activator C.</text>
</comment>
<comment type="disruption phenotype">
    <text evidence="1">No tail is synthesized.</text>
</comment>
<name>TUBE_BPMU</name>
<organism>
    <name type="scientific">Escherichia phage Mu</name>
    <name type="common">Bacteriophage Mu</name>
    <dbReference type="NCBI Taxonomy" id="2681603"/>
    <lineage>
        <taxon>Viruses</taxon>
        <taxon>Duplodnaviria</taxon>
        <taxon>Heunggongvirae</taxon>
        <taxon>Uroviricota</taxon>
        <taxon>Caudoviricetes</taxon>
        <taxon>Muvirus</taxon>
        <taxon>Muvirus mu</taxon>
    </lineage>
</organism>
<proteinExistence type="evidence at protein level"/>
<reference key="1">
    <citation type="journal article" date="1998" name="Biochim. Biophys. Acta">
        <title>Discovery of the tail tube gene of bacteriophage Mu and sequence analysis of the sheath and tube genes.</title>
        <authorList>
            <person name="Takeda S."/>
            <person name="Sasaki T."/>
            <person name="Ritani A."/>
            <person name="Howe M.M."/>
            <person name="Arisaka F."/>
        </authorList>
    </citation>
    <scope>NUCLEOTIDE SEQUENCE [GENOMIC DNA]</scope>
    <scope>FUNCTION</scope>
    <scope>PROTEIN SEQUENCE OF 2-11</scope>
</reference>
<reference key="2">
    <citation type="journal article" date="2002" name="J. Mol. Biol.">
        <title>Bacteriophage Mu genome sequence: analysis and comparison with Mu-like prophages in Haemophilus, Neisseria and Deinococcus.</title>
        <authorList>
            <person name="Morgan G.J."/>
            <person name="Hatfull G.F."/>
            <person name="Casjens S."/>
            <person name="Hendrix R.W."/>
        </authorList>
    </citation>
    <scope>NUCLEOTIDE SEQUENCE [LARGE SCALE GENOMIC DNA]</scope>
</reference>
<reference key="3">
    <citation type="journal article" date="1985" name="Virology">
        <title>Morphogenetic structures present in lysates of amber mutants of bacteriophage Mu.</title>
        <authorList>
            <person name="Grundy F.J."/>
            <person name="Howe M.M."/>
        </authorList>
    </citation>
    <scope>DISRUPTION PHENOTYPE</scope>
</reference>
<reference key="4">
    <citation type="journal article" date="1993" name="Genetics">
        <title>Mutational analysis of a C-dependent late promoter of bacteriophage Mu.</title>
        <authorList>
            <person name="Chiang L.W."/>
            <person name="Howe M.M."/>
        </authorList>
    </citation>
    <scope>INDUCTION</scope>
</reference>
<reference key="5">
    <citation type="journal article" date="2012" name="Adv. Exp. Med. Biol.">
        <title>Contractile tail machines of bacteriophages.</title>
        <authorList>
            <person name="Leiman P.G."/>
            <person name="Shneider M.M."/>
        </authorList>
    </citation>
    <scope>REVIEW</scope>
</reference>
<keyword id="KW-0002">3D-structure</keyword>
<keyword id="KW-0903">Direct protein sequencing</keyword>
<keyword id="KW-1035">Host cytoplasm</keyword>
<keyword id="KW-0426">Late protein</keyword>
<keyword id="KW-1185">Reference proteome</keyword>
<keyword id="KW-1242">Viral contractile tail ejection system</keyword>
<keyword id="KW-1171">Viral genome ejection through host cell envelope</keyword>
<keyword id="KW-1162">Viral penetration into host cytoplasm</keyword>
<keyword id="KW-1227">Viral tail protein</keyword>
<keyword id="KW-1228">Viral tail tube protein</keyword>
<keyword id="KW-0946">Virion</keyword>
<keyword id="KW-1160">Virus entry into host cell</keyword>